<feature type="chain" id="PRO_1000011312" description="Probable endonuclease 4">
    <location>
        <begin position="1"/>
        <end position="297"/>
    </location>
</feature>
<feature type="binding site" evidence="1">
    <location>
        <position position="69"/>
    </location>
    <ligand>
        <name>Zn(2+)</name>
        <dbReference type="ChEBI" id="CHEBI:29105"/>
        <label>1</label>
    </ligand>
</feature>
<feature type="binding site" evidence="1">
    <location>
        <position position="110"/>
    </location>
    <ligand>
        <name>Zn(2+)</name>
        <dbReference type="ChEBI" id="CHEBI:29105"/>
        <label>1</label>
    </ligand>
</feature>
<feature type="binding site" evidence="1">
    <location>
        <position position="145"/>
    </location>
    <ligand>
        <name>Zn(2+)</name>
        <dbReference type="ChEBI" id="CHEBI:29105"/>
        <label>1</label>
    </ligand>
</feature>
<feature type="binding site" evidence="1">
    <location>
        <position position="145"/>
    </location>
    <ligand>
        <name>Zn(2+)</name>
        <dbReference type="ChEBI" id="CHEBI:29105"/>
        <label>2</label>
    </ligand>
</feature>
<feature type="binding site" evidence="1">
    <location>
        <position position="179"/>
    </location>
    <ligand>
        <name>Zn(2+)</name>
        <dbReference type="ChEBI" id="CHEBI:29105"/>
        <label>2</label>
    </ligand>
</feature>
<feature type="binding site" evidence="1">
    <location>
        <position position="182"/>
    </location>
    <ligand>
        <name>Zn(2+)</name>
        <dbReference type="ChEBI" id="CHEBI:29105"/>
        <label>3</label>
    </ligand>
</feature>
<feature type="binding site" evidence="1">
    <location>
        <position position="214"/>
    </location>
    <ligand>
        <name>Zn(2+)</name>
        <dbReference type="ChEBI" id="CHEBI:29105"/>
        <label>2</label>
    </ligand>
</feature>
<feature type="binding site" evidence="1">
    <location>
        <position position="227"/>
    </location>
    <ligand>
        <name>Zn(2+)</name>
        <dbReference type="ChEBI" id="CHEBI:29105"/>
        <label>3</label>
    </ligand>
</feature>
<feature type="binding site" evidence="1">
    <location>
        <position position="229"/>
    </location>
    <ligand>
        <name>Zn(2+)</name>
        <dbReference type="ChEBI" id="CHEBI:29105"/>
        <label>3</label>
    </ligand>
</feature>
<feature type="binding site" evidence="1">
    <location>
        <position position="259"/>
    </location>
    <ligand>
        <name>Zn(2+)</name>
        <dbReference type="ChEBI" id="CHEBI:29105"/>
        <label>2</label>
    </ligand>
</feature>
<gene>
    <name evidence="1" type="primary">nfo</name>
    <name type="ordered locus">lwe1465</name>
</gene>
<accession>A0AIQ1</accession>
<comment type="function">
    <text evidence="1">Endonuclease IV plays a role in DNA repair. It cleaves phosphodiester bonds at apurinic or apyrimidinic (AP) sites, generating a 3'-hydroxyl group and a 5'-terminal sugar phosphate.</text>
</comment>
<comment type="catalytic activity">
    <reaction evidence="1">
        <text>Endonucleolytic cleavage to 5'-phosphooligonucleotide end-products.</text>
        <dbReference type="EC" id="3.1.21.2"/>
    </reaction>
</comment>
<comment type="cofactor">
    <cofactor evidence="1">
        <name>Zn(2+)</name>
        <dbReference type="ChEBI" id="CHEBI:29105"/>
    </cofactor>
    <text evidence="1">Binds 3 Zn(2+) ions.</text>
</comment>
<comment type="similarity">
    <text evidence="1">Belongs to the AP endonuclease 2 family.</text>
</comment>
<reference key="1">
    <citation type="journal article" date="2006" name="J. Bacteriol.">
        <title>Whole-genome sequence of Listeria welshimeri reveals common steps in genome reduction with Listeria innocua as compared to Listeria monocytogenes.</title>
        <authorList>
            <person name="Hain T."/>
            <person name="Steinweg C."/>
            <person name="Kuenne C.T."/>
            <person name="Billion A."/>
            <person name="Ghai R."/>
            <person name="Chatterjee S.S."/>
            <person name="Domann E."/>
            <person name="Kaerst U."/>
            <person name="Goesmann A."/>
            <person name="Bekel T."/>
            <person name="Bartels D."/>
            <person name="Kaiser O."/>
            <person name="Meyer F."/>
            <person name="Puehler A."/>
            <person name="Weisshaar B."/>
            <person name="Wehland J."/>
            <person name="Liang C."/>
            <person name="Dandekar T."/>
            <person name="Lampidis R."/>
            <person name="Kreft J."/>
            <person name="Goebel W."/>
            <person name="Chakraborty T."/>
        </authorList>
    </citation>
    <scope>NUCLEOTIDE SEQUENCE [LARGE SCALE GENOMIC DNA]</scope>
    <source>
        <strain>ATCC 35897 / DSM 20650 / CCUG 15529 / CIP 8149 / NCTC 11857 / SLCC 5334 / V8</strain>
    </source>
</reference>
<dbReference type="EC" id="3.1.21.2" evidence="1"/>
<dbReference type="EMBL" id="AM263198">
    <property type="protein sequence ID" value="CAK20883.1"/>
    <property type="molecule type" value="Genomic_DNA"/>
</dbReference>
<dbReference type="RefSeq" id="WP_011702260.1">
    <property type="nucleotide sequence ID" value="NC_008555.1"/>
</dbReference>
<dbReference type="SMR" id="A0AIQ1"/>
<dbReference type="STRING" id="386043.lwe1465"/>
<dbReference type="GeneID" id="61189341"/>
<dbReference type="KEGG" id="lwe:lwe1465"/>
<dbReference type="eggNOG" id="COG0648">
    <property type="taxonomic scope" value="Bacteria"/>
</dbReference>
<dbReference type="HOGENOM" id="CLU_025885_4_1_9"/>
<dbReference type="OrthoDB" id="9805666at2"/>
<dbReference type="Proteomes" id="UP000000779">
    <property type="component" value="Chromosome"/>
</dbReference>
<dbReference type="GO" id="GO:0008833">
    <property type="term" value="F:deoxyribonuclease IV (phage-T4-induced) activity"/>
    <property type="evidence" value="ECO:0007669"/>
    <property type="project" value="UniProtKB-UniRule"/>
</dbReference>
<dbReference type="GO" id="GO:0003677">
    <property type="term" value="F:DNA binding"/>
    <property type="evidence" value="ECO:0007669"/>
    <property type="project" value="InterPro"/>
</dbReference>
<dbReference type="GO" id="GO:0003906">
    <property type="term" value="F:DNA-(apurinic or apyrimidinic site) endonuclease activity"/>
    <property type="evidence" value="ECO:0007669"/>
    <property type="project" value="TreeGrafter"/>
</dbReference>
<dbReference type="GO" id="GO:0008081">
    <property type="term" value="F:phosphoric diester hydrolase activity"/>
    <property type="evidence" value="ECO:0007669"/>
    <property type="project" value="TreeGrafter"/>
</dbReference>
<dbReference type="GO" id="GO:0008270">
    <property type="term" value="F:zinc ion binding"/>
    <property type="evidence" value="ECO:0007669"/>
    <property type="project" value="UniProtKB-UniRule"/>
</dbReference>
<dbReference type="GO" id="GO:0006284">
    <property type="term" value="P:base-excision repair"/>
    <property type="evidence" value="ECO:0007669"/>
    <property type="project" value="TreeGrafter"/>
</dbReference>
<dbReference type="CDD" id="cd00019">
    <property type="entry name" value="AP2Ec"/>
    <property type="match status" value="1"/>
</dbReference>
<dbReference type="FunFam" id="3.20.20.150:FF:000001">
    <property type="entry name" value="Probable endonuclease 4"/>
    <property type="match status" value="1"/>
</dbReference>
<dbReference type="Gene3D" id="3.20.20.150">
    <property type="entry name" value="Divalent-metal-dependent TIM barrel enzymes"/>
    <property type="match status" value="1"/>
</dbReference>
<dbReference type="HAMAP" id="MF_00152">
    <property type="entry name" value="Nfo"/>
    <property type="match status" value="1"/>
</dbReference>
<dbReference type="InterPro" id="IPR001719">
    <property type="entry name" value="AP_endonuc_2"/>
</dbReference>
<dbReference type="InterPro" id="IPR018246">
    <property type="entry name" value="AP_endonuc_F2_Zn_BS"/>
</dbReference>
<dbReference type="InterPro" id="IPR036237">
    <property type="entry name" value="Xyl_isomerase-like_sf"/>
</dbReference>
<dbReference type="InterPro" id="IPR013022">
    <property type="entry name" value="Xyl_isomerase-like_TIM-brl"/>
</dbReference>
<dbReference type="NCBIfam" id="TIGR00587">
    <property type="entry name" value="nfo"/>
    <property type="match status" value="1"/>
</dbReference>
<dbReference type="NCBIfam" id="NF002196">
    <property type="entry name" value="PRK01060.1-1"/>
    <property type="match status" value="1"/>
</dbReference>
<dbReference type="PANTHER" id="PTHR21445:SF0">
    <property type="entry name" value="APURINIC-APYRIMIDINIC ENDONUCLEASE"/>
    <property type="match status" value="1"/>
</dbReference>
<dbReference type="PANTHER" id="PTHR21445">
    <property type="entry name" value="ENDONUCLEASE IV ENDODEOXYRIBONUCLEASE IV"/>
    <property type="match status" value="1"/>
</dbReference>
<dbReference type="Pfam" id="PF01261">
    <property type="entry name" value="AP_endonuc_2"/>
    <property type="match status" value="1"/>
</dbReference>
<dbReference type="SMART" id="SM00518">
    <property type="entry name" value="AP2Ec"/>
    <property type="match status" value="1"/>
</dbReference>
<dbReference type="SUPFAM" id="SSF51658">
    <property type="entry name" value="Xylose isomerase-like"/>
    <property type="match status" value="1"/>
</dbReference>
<dbReference type="PROSITE" id="PS00729">
    <property type="entry name" value="AP_NUCLEASE_F2_1"/>
    <property type="match status" value="1"/>
</dbReference>
<dbReference type="PROSITE" id="PS00730">
    <property type="entry name" value="AP_NUCLEASE_F2_2"/>
    <property type="match status" value="1"/>
</dbReference>
<dbReference type="PROSITE" id="PS00731">
    <property type="entry name" value="AP_NUCLEASE_F2_3"/>
    <property type="match status" value="1"/>
</dbReference>
<dbReference type="PROSITE" id="PS51432">
    <property type="entry name" value="AP_NUCLEASE_F2_4"/>
    <property type="match status" value="1"/>
</dbReference>
<name>END4_LISW6</name>
<sequence length="297" mass="32815">MLRLGSHVSMSGKKMLLGASEEAASYGSNTFMIYTGAPQNTRRKPIEELNIEAGLEHMKAHDMDDIVVHAPYIINIGNSVKPETFELGVNFLQSEIERTRALGAKQIVLHPGAHVGEGADKGIKQIIQGLNEALIHDQDVQIALETMAGKGSECGRTFEELAQIIDGVTHNELLSVTFDTCHTHDAGYDIVNDFDGVLNEFDKIIGIDRLKVLHINDSKNERGAHKDRHANIGFGHIGFDALHYVVHHPQLANVPKILETPYVGEDKASKKAPYKWEIAMLKNGEFDPDLLNKIQNS</sequence>
<organism>
    <name type="scientific">Listeria welshimeri serovar 6b (strain ATCC 35897 / DSM 20650 / CCUG 15529 / CIP 8149 / NCTC 11857 / SLCC 5334 / V8)</name>
    <dbReference type="NCBI Taxonomy" id="386043"/>
    <lineage>
        <taxon>Bacteria</taxon>
        <taxon>Bacillati</taxon>
        <taxon>Bacillota</taxon>
        <taxon>Bacilli</taxon>
        <taxon>Bacillales</taxon>
        <taxon>Listeriaceae</taxon>
        <taxon>Listeria</taxon>
    </lineage>
</organism>
<evidence type="ECO:0000255" key="1">
    <source>
        <dbReference type="HAMAP-Rule" id="MF_00152"/>
    </source>
</evidence>
<protein>
    <recommendedName>
        <fullName evidence="1">Probable endonuclease 4</fullName>
        <ecNumber evidence="1">3.1.21.2</ecNumber>
    </recommendedName>
    <alternativeName>
        <fullName evidence="1">Endodeoxyribonuclease IV</fullName>
    </alternativeName>
    <alternativeName>
        <fullName evidence="1">Endonuclease IV</fullName>
    </alternativeName>
</protein>
<keyword id="KW-0227">DNA damage</keyword>
<keyword id="KW-0234">DNA repair</keyword>
<keyword id="KW-0255">Endonuclease</keyword>
<keyword id="KW-0378">Hydrolase</keyword>
<keyword id="KW-0479">Metal-binding</keyword>
<keyword id="KW-0540">Nuclease</keyword>
<keyword id="KW-0862">Zinc</keyword>
<proteinExistence type="inferred from homology"/>